<comment type="function">
    <text evidence="1">Catalyzes the removal of elemental sulfur and selenium atoms from L-cysteine, L-cystine, L-selenocysteine, and L-selenocystine to produce L-alanine.</text>
</comment>
<comment type="catalytic activity">
    <reaction>
        <text>(sulfur carrier)-H + L-cysteine = (sulfur carrier)-SH + L-alanine</text>
        <dbReference type="Rhea" id="RHEA:43892"/>
        <dbReference type="Rhea" id="RHEA-COMP:14737"/>
        <dbReference type="Rhea" id="RHEA-COMP:14739"/>
        <dbReference type="ChEBI" id="CHEBI:29917"/>
        <dbReference type="ChEBI" id="CHEBI:35235"/>
        <dbReference type="ChEBI" id="CHEBI:57972"/>
        <dbReference type="ChEBI" id="CHEBI:64428"/>
        <dbReference type="EC" id="2.8.1.7"/>
    </reaction>
</comment>
<comment type="cofactor">
    <cofactor evidence="1">
        <name>pyridoxal 5'-phosphate</name>
        <dbReference type="ChEBI" id="CHEBI:597326"/>
    </cofactor>
</comment>
<comment type="similarity">
    <text evidence="2">Belongs to the class-V pyridoxal-phosphate-dependent aminotransferase family. Csd subfamily.</text>
</comment>
<reference key="1">
    <citation type="journal article" date="1995" name="DNA Res.">
        <title>Sequence analysis of the genome of the unicellular cyanobacterium Synechocystis sp. strain PCC6803. I. Sequence features in the 1 Mb region from map positions 64% to 92% of the genome.</title>
        <authorList>
            <person name="Kaneko T."/>
            <person name="Tanaka A."/>
            <person name="Sato S."/>
            <person name="Kotani H."/>
            <person name="Sazuka T."/>
            <person name="Miyajima N."/>
            <person name="Sugiura M."/>
            <person name="Tabata S."/>
        </authorList>
    </citation>
    <scope>NUCLEOTIDE SEQUENCE [LARGE SCALE GENOMIC DNA]</scope>
    <source>
        <strain>ATCC 27184 / PCC 6803 / N-1</strain>
    </source>
</reference>
<reference key="2">
    <citation type="journal article" date="1996" name="DNA Res.">
        <title>Sequence analysis of the genome of the unicellular cyanobacterium Synechocystis sp. strain PCC6803. II. Sequence determination of the entire genome and assignment of potential protein-coding regions.</title>
        <authorList>
            <person name="Kaneko T."/>
            <person name="Sato S."/>
            <person name="Kotani H."/>
            <person name="Tanaka A."/>
            <person name="Asamizu E."/>
            <person name="Nakamura Y."/>
            <person name="Miyajima N."/>
            <person name="Hirosawa M."/>
            <person name="Sugiura M."/>
            <person name="Sasamoto S."/>
            <person name="Kimura T."/>
            <person name="Hosouchi T."/>
            <person name="Matsuno A."/>
            <person name="Muraki A."/>
            <person name="Nakazaki N."/>
            <person name="Naruo K."/>
            <person name="Okumura S."/>
            <person name="Shimpo S."/>
            <person name="Takeuchi C."/>
            <person name="Wada T."/>
            <person name="Watanabe A."/>
            <person name="Yamada M."/>
            <person name="Yasuda M."/>
            <person name="Tabata S."/>
        </authorList>
    </citation>
    <scope>NUCLEOTIDE SEQUENCE [LARGE SCALE GENOMIC DNA]</scope>
    <source>
        <strain>ATCC 27184 / PCC 6803 / Kazusa</strain>
    </source>
</reference>
<reference key="3">
    <citation type="journal article" date="2004" name="Biochemistry">
        <title>Kinetic and structural characterization of Slr0077/SufS, the essential cysteine desulfurase from Synechocystis sp. PCC 6803.</title>
        <authorList>
            <person name="Tirupati B."/>
            <person name="Vey J.L."/>
            <person name="Drennan C.L."/>
            <person name="Bollinger J.M. Jr."/>
        </authorList>
    </citation>
    <scope>X-RAY CRYSTALLOGRAPHY (1.8 ANGSTROMS)</scope>
    <scope>PYRIDOXAL PHOSPHATE AT LYS-231</scope>
    <scope>ACTIVE SITE CYS-372</scope>
</reference>
<keyword id="KW-0002">3D-structure</keyword>
<keyword id="KW-0663">Pyridoxal phosphate</keyword>
<keyword id="KW-1185">Reference proteome</keyword>
<keyword id="KW-0808">Transferase</keyword>
<gene>
    <name type="primary">csd</name>
    <name type="synonym">sufS</name>
    <name type="ordered locus">slr0077</name>
</gene>
<organism>
    <name type="scientific">Synechocystis sp. (strain ATCC 27184 / PCC 6803 / Kazusa)</name>
    <dbReference type="NCBI Taxonomy" id="1111708"/>
    <lineage>
        <taxon>Bacteria</taxon>
        <taxon>Bacillati</taxon>
        <taxon>Cyanobacteriota</taxon>
        <taxon>Cyanophyceae</taxon>
        <taxon>Synechococcales</taxon>
        <taxon>Merismopediaceae</taxon>
        <taxon>Synechocystis</taxon>
    </lineage>
</organism>
<accession>Q55793</accession>
<protein>
    <recommendedName>
        <fullName>Probable cysteine desulfurase</fullName>
        <ecNumber>2.8.1.7</ecNumber>
    </recommendedName>
</protein>
<evidence type="ECO:0000250" key="1"/>
<evidence type="ECO:0000305" key="2"/>
<evidence type="ECO:0000305" key="3">
    <source>
    </source>
</evidence>
<evidence type="ECO:0007829" key="4">
    <source>
        <dbReference type="PDB" id="1T3I"/>
    </source>
</evidence>
<feature type="chain" id="PRO_0000150318" description="Probable cysteine desulfurase">
    <location>
        <begin position="1"/>
        <end position="420"/>
    </location>
</feature>
<feature type="active site" description="Cysteine persulfide intermediate" evidence="3">
    <location>
        <position position="372"/>
    </location>
</feature>
<feature type="modified residue" description="N6-(pyridoxal phosphate)lysine">
    <location>
        <position position="231"/>
    </location>
</feature>
<feature type="helix" evidence="4">
    <location>
        <begin position="9"/>
        <end position="13"/>
    </location>
</feature>
<feature type="helix" evidence="4">
    <location>
        <begin position="14"/>
        <end position="16"/>
    </location>
</feature>
<feature type="helix" evidence="4">
    <location>
        <begin position="18"/>
        <end position="20"/>
    </location>
</feature>
<feature type="turn" evidence="4">
    <location>
        <begin position="34"/>
        <end position="36"/>
    </location>
</feature>
<feature type="helix" evidence="4">
    <location>
        <begin position="42"/>
        <end position="54"/>
    </location>
</feature>
<feature type="helix" evidence="4">
    <location>
        <begin position="65"/>
        <end position="84"/>
    </location>
</feature>
<feature type="helix" evidence="4">
    <location>
        <begin position="90"/>
        <end position="92"/>
    </location>
</feature>
<feature type="strand" evidence="4">
    <location>
        <begin position="93"/>
        <end position="98"/>
    </location>
</feature>
<feature type="helix" evidence="4">
    <location>
        <begin position="99"/>
        <end position="109"/>
    </location>
</feature>
<feature type="helix" evidence="4">
    <location>
        <begin position="111"/>
        <end position="114"/>
    </location>
</feature>
<feature type="strand" evidence="4">
    <location>
        <begin position="120"/>
        <end position="124"/>
    </location>
</feature>
<feature type="helix" evidence="4">
    <location>
        <begin position="129"/>
        <end position="131"/>
    </location>
</feature>
<feature type="helix" evidence="4">
    <location>
        <begin position="133"/>
        <end position="142"/>
    </location>
</feature>
<feature type="strand" evidence="4">
    <location>
        <begin position="145"/>
        <end position="149"/>
    </location>
</feature>
<feature type="strand" evidence="4">
    <location>
        <begin position="155"/>
        <end position="157"/>
    </location>
</feature>
<feature type="helix" evidence="4">
    <location>
        <begin position="159"/>
        <end position="165"/>
    </location>
</feature>
<feature type="strand" evidence="4">
    <location>
        <begin position="170"/>
        <end position="178"/>
    </location>
</feature>
<feature type="turn" evidence="4">
    <location>
        <begin position="180"/>
        <end position="182"/>
    </location>
</feature>
<feature type="helix" evidence="4">
    <location>
        <begin position="188"/>
        <end position="197"/>
    </location>
</feature>
<feature type="strand" evidence="4">
    <location>
        <begin position="201"/>
        <end position="205"/>
    </location>
</feature>
<feature type="turn" evidence="4">
    <location>
        <begin position="207"/>
        <end position="212"/>
    </location>
</feature>
<feature type="helix" evidence="4">
    <location>
        <begin position="217"/>
        <end position="220"/>
    </location>
</feature>
<feature type="strand" evidence="4">
    <location>
        <begin position="223"/>
        <end position="228"/>
    </location>
</feature>
<feature type="helix" evidence="4">
    <location>
        <begin position="229"/>
        <end position="231"/>
    </location>
</feature>
<feature type="strand" evidence="4">
    <location>
        <begin position="239"/>
        <end position="243"/>
    </location>
</feature>
<feature type="helix" evidence="4">
    <location>
        <begin position="245"/>
        <end position="250"/>
    </location>
</feature>
<feature type="strand" evidence="4">
    <location>
        <begin position="260"/>
        <end position="264"/>
    </location>
</feature>
<feature type="strand" evidence="4">
    <location>
        <begin position="269"/>
        <end position="271"/>
    </location>
</feature>
<feature type="helix" evidence="4">
    <location>
        <begin position="276"/>
        <end position="278"/>
    </location>
</feature>
<feature type="helix" evidence="4">
    <location>
        <begin position="285"/>
        <end position="301"/>
    </location>
</feature>
<feature type="helix" evidence="4">
    <location>
        <begin position="303"/>
        <end position="322"/>
    </location>
</feature>
<feature type="strand" evidence="4">
    <location>
        <begin position="327"/>
        <end position="331"/>
    </location>
</feature>
<feature type="helix" evidence="4">
    <location>
        <begin position="334"/>
        <end position="336"/>
    </location>
</feature>
<feature type="strand" evidence="4">
    <location>
        <begin position="341"/>
        <end position="347"/>
    </location>
</feature>
<feature type="helix" evidence="4">
    <location>
        <begin position="352"/>
        <end position="360"/>
    </location>
</feature>
<feature type="turn" evidence="4">
    <location>
        <begin position="361"/>
        <end position="363"/>
    </location>
</feature>
<feature type="helix" evidence="4">
    <location>
        <begin position="374"/>
        <end position="379"/>
    </location>
</feature>
<feature type="strand" evidence="4">
    <location>
        <begin position="386"/>
        <end position="389"/>
    </location>
</feature>
<feature type="helix" evidence="4">
    <location>
        <begin position="396"/>
        <end position="412"/>
    </location>
</feature>
<proteinExistence type="evidence at protein level"/>
<name>CSD_SYNY3</name>
<sequence length="420" mass="46412">MVALQIPSLAATVRQDFPILNQEINGHPLVYLDNAATSQKPRAVLEKLMHYYENDNANVHRGAHQLSVRATDAYEAVRNKVAKFINARSPREIVYTRNATEAINLVAYSWGMNNLKAGDEIITTVMEHHSNLVPWQMVAAKTGAVLKFVQLDEQESFDLEHFKTLLSEKTKLVTVVHISNTLGCVNPAEEIAQLAHQAGAKVLVDACQSAPHYPLDVQLIDCDWLVASGHKMCAPTGIGFLYGKEEILEAMPPFFGGGEMIAEVFFDHFTTGELPHKFEAGTPAIAEAIALGAAVDYLTDLGMENIHNYEVELTHYLWQGLGQIPQLRLYGPNPKHGDRAALASFNVAGLHASDVATMVDQDGIAIRSGHHCTQPLHRLFDASGSARASLYFYNTKEEIDLFLQSLQATIRFFSDDDFTV</sequence>
<dbReference type="EC" id="2.8.1.7"/>
<dbReference type="EMBL" id="BA000022">
    <property type="protein sequence ID" value="BAA10545.1"/>
    <property type="molecule type" value="Genomic_DNA"/>
</dbReference>
<dbReference type="PIR" id="S76601">
    <property type="entry name" value="S76601"/>
</dbReference>
<dbReference type="PDB" id="1T3I">
    <property type="method" value="X-ray"/>
    <property type="resolution" value="1.80 A"/>
    <property type="chains" value="A/B=1-420"/>
</dbReference>
<dbReference type="PDBsum" id="1T3I"/>
<dbReference type="SMR" id="Q55793"/>
<dbReference type="FunCoup" id="Q55793">
    <property type="interactions" value="435"/>
</dbReference>
<dbReference type="IntAct" id="Q55793">
    <property type="interactions" value="2"/>
</dbReference>
<dbReference type="STRING" id="1148.gene:10500049"/>
<dbReference type="DrugBank" id="DB02346">
    <property type="generic name" value="3'-O-N-Octanoyl-a-D-Glucopyranosyl-B-D-Fructofuranoside"/>
</dbReference>
<dbReference type="PaxDb" id="1148-1001708"/>
<dbReference type="EnsemblBacteria" id="BAA10545">
    <property type="protein sequence ID" value="BAA10545"/>
    <property type="gene ID" value="BAA10545"/>
</dbReference>
<dbReference type="KEGG" id="syn:slr0077"/>
<dbReference type="eggNOG" id="COG0520">
    <property type="taxonomic scope" value="Bacteria"/>
</dbReference>
<dbReference type="InParanoid" id="Q55793"/>
<dbReference type="PhylomeDB" id="Q55793"/>
<dbReference type="BRENDA" id="2.8.1.7">
    <property type="organism ID" value="382"/>
</dbReference>
<dbReference type="EvolutionaryTrace" id="Q55793"/>
<dbReference type="Proteomes" id="UP000001425">
    <property type="component" value="Chromosome"/>
</dbReference>
<dbReference type="GO" id="GO:0031071">
    <property type="term" value="F:cysteine desulfurase activity"/>
    <property type="evidence" value="ECO:0007669"/>
    <property type="project" value="UniProtKB-EC"/>
</dbReference>
<dbReference type="GO" id="GO:0030170">
    <property type="term" value="F:pyridoxal phosphate binding"/>
    <property type="evidence" value="ECO:0007669"/>
    <property type="project" value="InterPro"/>
</dbReference>
<dbReference type="GO" id="GO:0006534">
    <property type="term" value="P:cysteine metabolic process"/>
    <property type="evidence" value="ECO:0007669"/>
    <property type="project" value="InterPro"/>
</dbReference>
<dbReference type="CDD" id="cd06453">
    <property type="entry name" value="SufS_like"/>
    <property type="match status" value="1"/>
</dbReference>
<dbReference type="Gene3D" id="3.90.1150.10">
    <property type="entry name" value="Aspartate Aminotransferase, domain 1"/>
    <property type="match status" value="1"/>
</dbReference>
<dbReference type="Gene3D" id="3.40.640.10">
    <property type="entry name" value="Type I PLP-dependent aspartate aminotransferase-like (Major domain)"/>
    <property type="match status" value="1"/>
</dbReference>
<dbReference type="InterPro" id="IPR000192">
    <property type="entry name" value="Aminotrans_V_dom"/>
</dbReference>
<dbReference type="InterPro" id="IPR010970">
    <property type="entry name" value="Cys_dSase_SufS"/>
</dbReference>
<dbReference type="InterPro" id="IPR015424">
    <property type="entry name" value="PyrdxlP-dep_Trfase"/>
</dbReference>
<dbReference type="InterPro" id="IPR015421">
    <property type="entry name" value="PyrdxlP-dep_Trfase_major"/>
</dbReference>
<dbReference type="InterPro" id="IPR015422">
    <property type="entry name" value="PyrdxlP-dep_Trfase_small"/>
</dbReference>
<dbReference type="NCBIfam" id="TIGR01979">
    <property type="entry name" value="sufS"/>
    <property type="match status" value="1"/>
</dbReference>
<dbReference type="PANTHER" id="PTHR43586">
    <property type="entry name" value="CYSTEINE DESULFURASE"/>
    <property type="match status" value="1"/>
</dbReference>
<dbReference type="PANTHER" id="PTHR43586:SF8">
    <property type="entry name" value="CYSTEINE DESULFURASE 1, CHLOROPLASTIC"/>
    <property type="match status" value="1"/>
</dbReference>
<dbReference type="Pfam" id="PF00266">
    <property type="entry name" value="Aminotran_5"/>
    <property type="match status" value="1"/>
</dbReference>
<dbReference type="SUPFAM" id="SSF53383">
    <property type="entry name" value="PLP-dependent transferases"/>
    <property type="match status" value="1"/>
</dbReference>